<accession>A4SN46</accession>
<feature type="chain" id="PRO_1000000755" description="UPF0060 membrane protein ASA_2267">
    <location>
        <begin position="1"/>
        <end position="110"/>
    </location>
</feature>
<feature type="transmembrane region" description="Helical" evidence="1">
    <location>
        <begin position="7"/>
        <end position="27"/>
    </location>
</feature>
<feature type="transmembrane region" description="Helical" evidence="1">
    <location>
        <begin position="33"/>
        <end position="53"/>
    </location>
</feature>
<feature type="transmembrane region" description="Helical" evidence="1">
    <location>
        <begin position="63"/>
        <end position="83"/>
    </location>
</feature>
<feature type="transmembrane region" description="Helical" evidence="1">
    <location>
        <begin position="87"/>
        <end position="107"/>
    </location>
</feature>
<dbReference type="EMBL" id="CP000644">
    <property type="protein sequence ID" value="ABO90318.1"/>
    <property type="molecule type" value="Genomic_DNA"/>
</dbReference>
<dbReference type="RefSeq" id="WP_005311075.1">
    <property type="nucleotide sequence ID" value="NC_009348.1"/>
</dbReference>
<dbReference type="SMR" id="A4SN46"/>
<dbReference type="STRING" id="29491.GCA_000820065_01663"/>
<dbReference type="KEGG" id="asa:ASA_2267"/>
<dbReference type="eggNOG" id="COG1742">
    <property type="taxonomic scope" value="Bacteria"/>
</dbReference>
<dbReference type="HOGENOM" id="CLU_117653_2_0_6"/>
<dbReference type="Proteomes" id="UP000000225">
    <property type="component" value="Chromosome"/>
</dbReference>
<dbReference type="GO" id="GO:0005886">
    <property type="term" value="C:plasma membrane"/>
    <property type="evidence" value="ECO:0007669"/>
    <property type="project" value="UniProtKB-SubCell"/>
</dbReference>
<dbReference type="HAMAP" id="MF_00010">
    <property type="entry name" value="UPF0060"/>
    <property type="match status" value="1"/>
</dbReference>
<dbReference type="InterPro" id="IPR003844">
    <property type="entry name" value="UPF0060"/>
</dbReference>
<dbReference type="NCBIfam" id="NF002586">
    <property type="entry name" value="PRK02237.1"/>
    <property type="match status" value="1"/>
</dbReference>
<dbReference type="PANTHER" id="PTHR36116">
    <property type="entry name" value="UPF0060 MEMBRANE PROTEIN YNFA"/>
    <property type="match status" value="1"/>
</dbReference>
<dbReference type="PANTHER" id="PTHR36116:SF1">
    <property type="entry name" value="UPF0060 MEMBRANE PROTEIN YNFA"/>
    <property type="match status" value="1"/>
</dbReference>
<dbReference type="Pfam" id="PF02694">
    <property type="entry name" value="UPF0060"/>
    <property type="match status" value="1"/>
</dbReference>
<dbReference type="SUPFAM" id="SSF103481">
    <property type="entry name" value="Multidrug resistance efflux transporter EmrE"/>
    <property type="match status" value="1"/>
</dbReference>
<gene>
    <name type="ordered locus">ASA_2267</name>
</gene>
<organism>
    <name type="scientific">Aeromonas salmonicida (strain A449)</name>
    <dbReference type="NCBI Taxonomy" id="382245"/>
    <lineage>
        <taxon>Bacteria</taxon>
        <taxon>Pseudomonadati</taxon>
        <taxon>Pseudomonadota</taxon>
        <taxon>Gammaproteobacteria</taxon>
        <taxon>Aeromonadales</taxon>
        <taxon>Aeromonadaceae</taxon>
        <taxon>Aeromonas</taxon>
    </lineage>
</organism>
<comment type="subcellular location">
    <subcellularLocation>
        <location evidence="1">Cell inner membrane</location>
        <topology evidence="1">Multi-pass membrane protein</topology>
    </subcellularLocation>
</comment>
<comment type="similarity">
    <text evidence="1">Belongs to the UPF0060 family.</text>
</comment>
<evidence type="ECO:0000255" key="1">
    <source>
        <dbReference type="HAMAP-Rule" id="MF_00010"/>
    </source>
</evidence>
<proteinExistence type="inferred from homology"/>
<protein>
    <recommendedName>
        <fullName evidence="1">UPF0060 membrane protein ASA_2267</fullName>
    </recommendedName>
</protein>
<name>Y2267_AERS4</name>
<reference key="1">
    <citation type="journal article" date="2008" name="BMC Genomics">
        <title>The genome of Aeromonas salmonicida subsp. salmonicida A449: insights into the evolution of a fish pathogen.</title>
        <authorList>
            <person name="Reith M.E."/>
            <person name="Singh R.K."/>
            <person name="Curtis B."/>
            <person name="Boyd J.M."/>
            <person name="Bouevitch A."/>
            <person name="Kimball J."/>
            <person name="Munholland J."/>
            <person name="Murphy C."/>
            <person name="Sarty D."/>
            <person name="Williams J."/>
            <person name="Nash J.H."/>
            <person name="Johnson S.C."/>
            <person name="Brown L.L."/>
        </authorList>
    </citation>
    <scope>NUCLEOTIDE SEQUENCE [LARGE SCALE GENOMIC DNA]</scope>
    <source>
        <strain>A449</strain>
    </source>
</reference>
<sequence length="110" mass="12107">MVELKTIGLFLITAVAEIVGCYLPYLWLTQGRSVWLLLPAGLSLVLFAWLLSLHPTAAGRVYAAYGGVYIFVAILWLWLVDGIRPTLWDLVGSLVALFGMAIIMFAPRPA</sequence>
<keyword id="KW-0997">Cell inner membrane</keyword>
<keyword id="KW-1003">Cell membrane</keyword>
<keyword id="KW-0472">Membrane</keyword>
<keyword id="KW-0812">Transmembrane</keyword>
<keyword id="KW-1133">Transmembrane helix</keyword>